<keyword id="KW-0472">Membrane</keyword>
<keyword id="KW-0602">Photosynthesis</keyword>
<keyword id="KW-0604">Photosystem II</keyword>
<keyword id="KW-0674">Reaction center</keyword>
<keyword id="KW-1185">Reference proteome</keyword>
<keyword id="KW-0793">Thylakoid</keyword>
<keyword id="KW-0812">Transmembrane</keyword>
<keyword id="KW-1133">Transmembrane helix</keyword>
<organism>
    <name type="scientific">Nostoc sp. (strain PCC 7120 / SAG 25.82 / UTEX 2576)</name>
    <dbReference type="NCBI Taxonomy" id="103690"/>
    <lineage>
        <taxon>Bacteria</taxon>
        <taxon>Bacillati</taxon>
        <taxon>Cyanobacteriota</taxon>
        <taxon>Cyanophyceae</taxon>
        <taxon>Nostocales</taxon>
        <taxon>Nostocaceae</taxon>
        <taxon>Nostoc</taxon>
    </lineage>
</organism>
<evidence type="ECO:0000255" key="1">
    <source>
        <dbReference type="HAMAP-Rule" id="MF_01317"/>
    </source>
</evidence>
<dbReference type="EMBL" id="BA000019">
    <property type="protein sequence ID" value="BAB75546.1"/>
    <property type="molecule type" value="Genomic_DNA"/>
</dbReference>
<dbReference type="PIR" id="AH2286">
    <property type="entry name" value="AH2286"/>
</dbReference>
<dbReference type="SMR" id="Q8YQI0"/>
<dbReference type="STRING" id="103690.gene:10495889"/>
<dbReference type="KEGG" id="ana:asr3847"/>
<dbReference type="Proteomes" id="UP000002483">
    <property type="component" value="Chromosome"/>
</dbReference>
<dbReference type="GO" id="GO:0009539">
    <property type="term" value="C:photosystem II reaction center"/>
    <property type="evidence" value="ECO:0007669"/>
    <property type="project" value="InterPro"/>
</dbReference>
<dbReference type="GO" id="GO:0031676">
    <property type="term" value="C:plasma membrane-derived thylakoid membrane"/>
    <property type="evidence" value="ECO:0007669"/>
    <property type="project" value="UniProtKB-SubCell"/>
</dbReference>
<dbReference type="GO" id="GO:0015979">
    <property type="term" value="P:photosynthesis"/>
    <property type="evidence" value="ECO:0007669"/>
    <property type="project" value="UniProtKB-UniRule"/>
</dbReference>
<dbReference type="HAMAP" id="MF_01317">
    <property type="entry name" value="PSII_PsbL"/>
    <property type="match status" value="1"/>
</dbReference>
<dbReference type="InterPro" id="IPR003372">
    <property type="entry name" value="PSII_PsbL"/>
</dbReference>
<dbReference type="InterPro" id="IPR037266">
    <property type="entry name" value="PSII_PsbL_sf"/>
</dbReference>
<dbReference type="NCBIfam" id="NF001972">
    <property type="entry name" value="PRK00753.1"/>
    <property type="match status" value="1"/>
</dbReference>
<dbReference type="Pfam" id="PF02419">
    <property type="entry name" value="PsbL"/>
    <property type="match status" value="1"/>
</dbReference>
<dbReference type="SUPFAM" id="SSF161017">
    <property type="entry name" value="Photosystem II reaction center protein L, PsbL"/>
    <property type="match status" value="1"/>
</dbReference>
<comment type="function">
    <text evidence="1">One of the components of the core complex of photosystem II (PSII). PSII is a light-driven water:plastoquinone oxidoreductase that uses light energy to abstract electrons from H(2)O, generating O(2) and a proton gradient subsequently used for ATP formation. It consists of a core antenna complex that captures photons, and an electron transfer chain that converts photonic excitation into a charge separation. This subunit is found at the monomer-monomer interface and is required for correct PSII assembly and/or dimerization.</text>
</comment>
<comment type="subunit">
    <text evidence="1">PSII is composed of 1 copy each of membrane proteins PsbA, PsbB, PsbC, PsbD, PsbE, PsbF, PsbH, PsbI, PsbJ, PsbK, PsbL, PsbM, PsbT, PsbX, PsbY, PsbZ, Psb30/Ycf12, peripheral proteins PsbO, CyanoQ (PsbQ), PsbU, PsbV and a large number of cofactors. It forms dimeric complexes.</text>
</comment>
<comment type="subcellular location">
    <subcellularLocation>
        <location evidence="1">Cellular thylakoid membrane</location>
        <topology evidence="1">Single-pass membrane protein</topology>
    </subcellularLocation>
</comment>
<comment type="similarity">
    <text evidence="1">Belongs to the PsbL family.</text>
</comment>
<name>PSBL_NOSS1</name>
<protein>
    <recommendedName>
        <fullName evidence="1">Photosystem II reaction center protein L</fullName>
        <shortName evidence="1">PSII-L</shortName>
    </recommendedName>
</protein>
<sequence length="39" mass="4518">MERTPNPNNQPVELNRTSLYLGLLLVFVLGILFSSYFFN</sequence>
<reference key="1">
    <citation type="journal article" date="2001" name="DNA Res.">
        <title>Complete genomic sequence of the filamentous nitrogen-fixing cyanobacterium Anabaena sp. strain PCC 7120.</title>
        <authorList>
            <person name="Kaneko T."/>
            <person name="Nakamura Y."/>
            <person name="Wolk C.P."/>
            <person name="Kuritz T."/>
            <person name="Sasamoto S."/>
            <person name="Watanabe A."/>
            <person name="Iriguchi M."/>
            <person name="Ishikawa A."/>
            <person name="Kawashima K."/>
            <person name="Kimura T."/>
            <person name="Kishida Y."/>
            <person name="Kohara M."/>
            <person name="Matsumoto M."/>
            <person name="Matsuno A."/>
            <person name="Muraki A."/>
            <person name="Nakazaki N."/>
            <person name="Shimpo S."/>
            <person name="Sugimoto M."/>
            <person name="Takazawa M."/>
            <person name="Yamada M."/>
            <person name="Yasuda M."/>
            <person name="Tabata S."/>
        </authorList>
    </citation>
    <scope>NUCLEOTIDE SEQUENCE [LARGE SCALE GENOMIC DNA]</scope>
    <source>
        <strain>PCC 7120 / SAG 25.82 / UTEX 2576</strain>
    </source>
</reference>
<proteinExistence type="inferred from homology"/>
<feature type="chain" id="PRO_0000219785" description="Photosystem II reaction center protein L">
    <location>
        <begin position="1"/>
        <end position="39"/>
    </location>
</feature>
<feature type="transmembrane region" description="Helical" evidence="1">
    <location>
        <begin position="18"/>
        <end position="38"/>
    </location>
</feature>
<accession>Q8YQI0</accession>
<gene>
    <name evidence="1" type="primary">psbL</name>
    <name type="ordered locus">asr3847</name>
</gene>